<dbReference type="PIR" id="S65381">
    <property type="entry name" value="S65381"/>
</dbReference>
<dbReference type="CORUM" id="P80430"/>
<dbReference type="FunCoup" id="P80430">
    <property type="interactions" value="12"/>
</dbReference>
<dbReference type="GlyGen" id="P80430">
    <property type="glycosylation" value="1 site, 1 O-linked glycan (1 site)"/>
</dbReference>
<dbReference type="PhosphoSitePlus" id="P80430"/>
<dbReference type="UCSC" id="RGD:1309849">
    <property type="organism name" value="rat"/>
</dbReference>
<dbReference type="AGR" id="RGD:1584097"/>
<dbReference type="RGD" id="1584097">
    <property type="gene designation" value="Cox6b1"/>
</dbReference>
<dbReference type="InParanoid" id="P80430"/>
<dbReference type="UniPathway" id="UPA00705"/>
<dbReference type="Proteomes" id="UP000002494">
    <property type="component" value="Unplaced"/>
</dbReference>
<dbReference type="GO" id="GO:0005743">
    <property type="term" value="C:mitochondrial inner membrane"/>
    <property type="evidence" value="ECO:0000266"/>
    <property type="project" value="RGD"/>
</dbReference>
<dbReference type="GO" id="GO:0031966">
    <property type="term" value="C:mitochondrial membrane"/>
    <property type="evidence" value="ECO:0000266"/>
    <property type="project" value="RGD"/>
</dbReference>
<dbReference type="GO" id="GO:0005739">
    <property type="term" value="C:mitochondrion"/>
    <property type="evidence" value="ECO:0000318"/>
    <property type="project" value="GO_Central"/>
</dbReference>
<dbReference type="GO" id="GO:0045277">
    <property type="term" value="C:respiratory chain complex IV"/>
    <property type="evidence" value="ECO:0000266"/>
    <property type="project" value="RGD"/>
</dbReference>
<dbReference type="GO" id="GO:0006119">
    <property type="term" value="P:oxidative phosphorylation"/>
    <property type="evidence" value="ECO:0007669"/>
    <property type="project" value="UniProtKB-UniPathway"/>
</dbReference>
<keyword id="KW-0903">Direct protein sequencing</keyword>
<keyword id="KW-0472">Membrane</keyword>
<keyword id="KW-0496">Mitochondrion</keyword>
<keyword id="KW-0999">Mitochondrion inner membrane</keyword>
<keyword id="KW-1185">Reference proteome</keyword>
<feature type="chain" id="PRO_0000194917" description="Cytochrome c oxidase subunit 6B1">
    <location>
        <begin position="1" status="less than"/>
        <end position="8" status="greater than"/>
    </location>
</feature>
<feature type="non-terminal residue">
    <location>
        <position position="1"/>
    </location>
</feature>
<feature type="non-terminal residue">
    <location>
        <position position="8"/>
    </location>
</feature>
<reference key="1">
    <citation type="journal article" date="1995" name="Eur. J. Biochem.">
        <title>Cytochrome-c oxidase in developing rat heart. Enzymic properties and amino-terminal sequences suggest identity of the fetal heart and the adult liver isoform.</title>
        <authorList>
            <person name="Schaegger H."/>
            <person name="Noack H."/>
            <person name="Halangk W."/>
            <person name="Brandt U."/>
            <person name="von Jagow G."/>
        </authorList>
    </citation>
    <scope>PROTEIN SEQUENCE</scope>
    <source>
        <strain>Wistar</strain>
        <tissue>Liver</tissue>
    </source>
</reference>
<proteinExistence type="evidence at protein level"/>
<comment type="function">
    <text evidence="2">Component of the cytochrome c oxidase, the last enzyme in the mitochondrial electron transport chain which drives oxidative phosphorylation. The respiratory chain contains 3 multisubunit complexes succinate dehydrogenase (complex II, CII), ubiquinol-cytochrome c oxidoreductase (cytochrome b-c1 complex, complex III, CIII) and cytochrome c oxidase (complex IV, CIV), that cooperate to transfer electrons derived from NADH and succinate to molecular oxygen, creating an electrochemical gradient over the inner membrane that drives transmembrane transport and the ATP synthase. Cytochrome c oxidase is the component of the respiratory chain that catalyzes the reduction of oxygen to water. Electrons originating from reduced cytochrome c in the intermembrane space (IMS) are transferred via the dinuclear copper A center (CU(A)) of subunit 2 and heme A of subunit 1 to the active site in subunit 1, a binuclear center (BNC) formed by heme A3 and copper B (CU(B)). The BNC reduces molecular oxygen to 2 water molecules using 4 electrons from cytochrome c in the IMS and 4 protons from the mitochondrial matrix.</text>
</comment>
<comment type="pathway">
    <text evidence="2">Energy metabolism; oxidative phosphorylation.</text>
</comment>
<comment type="subunit">
    <text evidence="1">Component of the cytochrome c oxidase (complex IV, CIV), a multisubunit enzyme composed of 14 subunits. The complex is composed of a catalytic core of 3 subunits MT-CO1, MT-CO2 and MT-CO3, encoded in the mitochondrial DNA, and 11 supernumerary subunits COX4I, COX5A, COX5B, COX6A, COX6B, COX6C, COX7A, COX7B, COX7C, COX8 and NDUFA4, which are encoded in the nuclear genome. The complex exists as a monomer or a dimer and forms supercomplexes (SCs) in the inner mitochondrial membrane with NADH-ubiquinone oxidoreductase (complex I, CI) and ubiquinol-cytochrome c oxidoreductase (cytochrome b-c1 complex, complex III, CIII), resulting in different assemblies (supercomplex SCI(1)III(2)IV(1) and megacomplex MCI(2)III(2)IV(2)).</text>
</comment>
<comment type="subcellular location">
    <subcellularLocation>
        <location evidence="1">Mitochondrion inner membrane</location>
        <topology evidence="1">Peripheral membrane protein</topology>
        <orientation evidence="1">Intermembrane side</orientation>
    </subcellularLocation>
</comment>
<comment type="similarity">
    <text evidence="3">Belongs to the cytochrome c oxidase subunit 6B family.</text>
</comment>
<name>CX6B1_RAT</name>
<evidence type="ECO:0000250" key="1">
    <source>
        <dbReference type="UniProtKB" id="P00429"/>
    </source>
</evidence>
<evidence type="ECO:0000250" key="2">
    <source>
        <dbReference type="UniProtKB" id="Q01519"/>
    </source>
</evidence>
<evidence type="ECO:0000305" key="3"/>
<sequence length="8" mass="1040">QNXLDFHR</sequence>
<accession>P80430</accession>
<protein>
    <recommendedName>
        <fullName>Cytochrome c oxidase subunit 6B1</fullName>
    </recommendedName>
    <alternativeName>
        <fullName>Cytochrome c oxidase subunit VIb isoform 1</fullName>
        <shortName>COX VIb-1</shortName>
    </alternativeName>
</protein>
<gene>
    <name type="primary">Cox6b1</name>
    <name type="synonym">Cox6b</name>
</gene>
<organism>
    <name type="scientific">Rattus norvegicus</name>
    <name type="common">Rat</name>
    <dbReference type="NCBI Taxonomy" id="10116"/>
    <lineage>
        <taxon>Eukaryota</taxon>
        <taxon>Metazoa</taxon>
        <taxon>Chordata</taxon>
        <taxon>Craniata</taxon>
        <taxon>Vertebrata</taxon>
        <taxon>Euteleostomi</taxon>
        <taxon>Mammalia</taxon>
        <taxon>Eutheria</taxon>
        <taxon>Euarchontoglires</taxon>
        <taxon>Glires</taxon>
        <taxon>Rodentia</taxon>
        <taxon>Myomorpha</taxon>
        <taxon>Muroidea</taxon>
        <taxon>Muridae</taxon>
        <taxon>Murinae</taxon>
        <taxon>Rattus</taxon>
    </lineage>
</organism>